<dbReference type="EC" id="3.13.2.1" evidence="1"/>
<dbReference type="EMBL" id="AM902716">
    <property type="protein sequence ID" value="CAP45115.1"/>
    <property type="molecule type" value="Genomic_DNA"/>
</dbReference>
<dbReference type="SMR" id="A9IGY5"/>
<dbReference type="STRING" id="94624.Bpet4763"/>
<dbReference type="KEGG" id="bpt:Bpet4763"/>
<dbReference type="eggNOG" id="COG0499">
    <property type="taxonomic scope" value="Bacteria"/>
</dbReference>
<dbReference type="UniPathway" id="UPA00314">
    <property type="reaction ID" value="UER00076"/>
</dbReference>
<dbReference type="Proteomes" id="UP000001225">
    <property type="component" value="Chromosome"/>
</dbReference>
<dbReference type="GO" id="GO:0005829">
    <property type="term" value="C:cytosol"/>
    <property type="evidence" value="ECO:0007669"/>
    <property type="project" value="TreeGrafter"/>
</dbReference>
<dbReference type="GO" id="GO:0004013">
    <property type="term" value="F:adenosylhomocysteinase activity"/>
    <property type="evidence" value="ECO:0007669"/>
    <property type="project" value="UniProtKB-UniRule"/>
</dbReference>
<dbReference type="GO" id="GO:0071269">
    <property type="term" value="P:L-homocysteine biosynthetic process"/>
    <property type="evidence" value="ECO:0007669"/>
    <property type="project" value="UniProtKB-UniRule"/>
</dbReference>
<dbReference type="GO" id="GO:0006730">
    <property type="term" value="P:one-carbon metabolic process"/>
    <property type="evidence" value="ECO:0007669"/>
    <property type="project" value="UniProtKB-KW"/>
</dbReference>
<dbReference type="GO" id="GO:0033353">
    <property type="term" value="P:S-adenosylmethionine cycle"/>
    <property type="evidence" value="ECO:0007669"/>
    <property type="project" value="TreeGrafter"/>
</dbReference>
<dbReference type="CDD" id="cd00401">
    <property type="entry name" value="SAHH"/>
    <property type="match status" value="1"/>
</dbReference>
<dbReference type="FunFam" id="3.40.50.720:FF:000004">
    <property type="entry name" value="Adenosylhomocysteinase"/>
    <property type="match status" value="1"/>
</dbReference>
<dbReference type="Gene3D" id="3.40.50.1480">
    <property type="entry name" value="Adenosylhomocysteinase-like"/>
    <property type="match status" value="1"/>
</dbReference>
<dbReference type="Gene3D" id="3.40.50.720">
    <property type="entry name" value="NAD(P)-binding Rossmann-like Domain"/>
    <property type="match status" value="1"/>
</dbReference>
<dbReference type="HAMAP" id="MF_00563">
    <property type="entry name" value="AdoHcyase"/>
    <property type="match status" value="1"/>
</dbReference>
<dbReference type="InterPro" id="IPR042172">
    <property type="entry name" value="Adenosylhomocyst_ase-like_sf"/>
</dbReference>
<dbReference type="InterPro" id="IPR000043">
    <property type="entry name" value="Adenosylhomocysteinase-like"/>
</dbReference>
<dbReference type="InterPro" id="IPR015878">
    <property type="entry name" value="Ado_hCys_hydrolase_NAD-bd"/>
</dbReference>
<dbReference type="InterPro" id="IPR036291">
    <property type="entry name" value="NAD(P)-bd_dom_sf"/>
</dbReference>
<dbReference type="InterPro" id="IPR020082">
    <property type="entry name" value="S-Ado-L-homoCys_hydrolase_CS"/>
</dbReference>
<dbReference type="NCBIfam" id="TIGR00936">
    <property type="entry name" value="ahcY"/>
    <property type="match status" value="1"/>
</dbReference>
<dbReference type="NCBIfam" id="NF004005">
    <property type="entry name" value="PRK05476.2-3"/>
    <property type="match status" value="1"/>
</dbReference>
<dbReference type="PANTHER" id="PTHR23420">
    <property type="entry name" value="ADENOSYLHOMOCYSTEINASE"/>
    <property type="match status" value="1"/>
</dbReference>
<dbReference type="PANTHER" id="PTHR23420:SF0">
    <property type="entry name" value="ADENOSYLHOMOCYSTEINASE"/>
    <property type="match status" value="1"/>
</dbReference>
<dbReference type="Pfam" id="PF05221">
    <property type="entry name" value="AdoHcyase"/>
    <property type="match status" value="1"/>
</dbReference>
<dbReference type="Pfam" id="PF00670">
    <property type="entry name" value="AdoHcyase_NAD"/>
    <property type="match status" value="1"/>
</dbReference>
<dbReference type="PIRSF" id="PIRSF001109">
    <property type="entry name" value="Ad_hcy_hydrolase"/>
    <property type="match status" value="1"/>
</dbReference>
<dbReference type="SMART" id="SM00996">
    <property type="entry name" value="AdoHcyase"/>
    <property type="match status" value="1"/>
</dbReference>
<dbReference type="SMART" id="SM00997">
    <property type="entry name" value="AdoHcyase_NAD"/>
    <property type="match status" value="1"/>
</dbReference>
<dbReference type="SUPFAM" id="SSF52283">
    <property type="entry name" value="Formate/glycerate dehydrogenase catalytic domain-like"/>
    <property type="match status" value="1"/>
</dbReference>
<dbReference type="SUPFAM" id="SSF51735">
    <property type="entry name" value="NAD(P)-binding Rossmann-fold domains"/>
    <property type="match status" value="1"/>
</dbReference>
<dbReference type="PROSITE" id="PS00738">
    <property type="entry name" value="ADOHCYASE_1"/>
    <property type="match status" value="1"/>
</dbReference>
<dbReference type="PROSITE" id="PS00739">
    <property type="entry name" value="ADOHCYASE_2"/>
    <property type="match status" value="1"/>
</dbReference>
<gene>
    <name evidence="1" type="primary">ahcY</name>
    <name type="ordered locus">Bpet4763</name>
</gene>
<comment type="function">
    <text evidence="1">May play a key role in the regulation of the intracellular concentration of adenosylhomocysteine.</text>
</comment>
<comment type="catalytic activity">
    <reaction evidence="1">
        <text>S-adenosyl-L-homocysteine + H2O = L-homocysteine + adenosine</text>
        <dbReference type="Rhea" id="RHEA:21708"/>
        <dbReference type="ChEBI" id="CHEBI:15377"/>
        <dbReference type="ChEBI" id="CHEBI:16335"/>
        <dbReference type="ChEBI" id="CHEBI:57856"/>
        <dbReference type="ChEBI" id="CHEBI:58199"/>
        <dbReference type="EC" id="3.13.2.1"/>
    </reaction>
</comment>
<comment type="cofactor">
    <cofactor evidence="1">
        <name>NAD(+)</name>
        <dbReference type="ChEBI" id="CHEBI:57540"/>
    </cofactor>
    <text evidence="1">Binds 1 NAD(+) per subunit.</text>
</comment>
<comment type="pathway">
    <text evidence="1">Amino-acid biosynthesis; L-homocysteine biosynthesis; L-homocysteine from S-adenosyl-L-homocysteine: step 1/1.</text>
</comment>
<comment type="subcellular location">
    <subcellularLocation>
        <location evidence="1">Cytoplasm</location>
    </subcellularLocation>
</comment>
<comment type="similarity">
    <text evidence="1">Belongs to the adenosylhomocysteinase family.</text>
</comment>
<name>SAHH_BORPD</name>
<organism>
    <name type="scientific">Bordetella petrii (strain ATCC BAA-461 / DSM 12804 / CCUG 43448)</name>
    <dbReference type="NCBI Taxonomy" id="340100"/>
    <lineage>
        <taxon>Bacteria</taxon>
        <taxon>Pseudomonadati</taxon>
        <taxon>Pseudomonadota</taxon>
        <taxon>Betaproteobacteria</taxon>
        <taxon>Burkholderiales</taxon>
        <taxon>Alcaligenaceae</taxon>
        <taxon>Bordetella</taxon>
    </lineage>
</organism>
<proteinExistence type="inferred from homology"/>
<keyword id="KW-0963">Cytoplasm</keyword>
<keyword id="KW-0378">Hydrolase</keyword>
<keyword id="KW-0520">NAD</keyword>
<keyword id="KW-0554">One-carbon metabolism</keyword>
<sequence length="472" mass="51766">MNAVSDQAVADYHVADMSLAAWGRRELAIAETEMPGLMAIREEFAASQPLKGARIAGSLHMTIQTGVLIETLVALGAEVRWASCNIFSTQDHAAAAIAATGTPVFAVKGETLEEYWQYTHRIFEWPEGRHANMILDDGGDATLLLHLGARAEQDASVLAKPGSEEERVLFAAIKATLARDPKWYSTRLAQIRGVTEETTTGVHRLYQMAQKGELAFAAINVNDSVTKSKFDNLYGCRESLVDGIKRATDVMVAGKIAVVAGYGDVGKGCAQALAALRAQVWVTEIDPICALQAAMEGYKVVTMEEAAPHADIFVTATGNYHVITREHMQAMKDQAIVCNIGHFDNEIDVAALDDCQWEEIKPQVDHVVFPDGKRIILLAKGRLVNLGCATGHPSFVMSSSFANQTIAQIELYTRNEAYTRGQVYVLPKHLDEKVARLHLKKLGAKLTSLRQDQADYINVPVEGPYKPDHYRY</sequence>
<protein>
    <recommendedName>
        <fullName evidence="1">Adenosylhomocysteinase</fullName>
        <ecNumber evidence="1">3.13.2.1</ecNumber>
    </recommendedName>
    <alternativeName>
        <fullName evidence="1">S-adenosyl-L-homocysteine hydrolase</fullName>
        <shortName evidence="1">AdoHcyase</shortName>
    </alternativeName>
</protein>
<accession>A9IGY5</accession>
<reference key="1">
    <citation type="journal article" date="2008" name="BMC Genomics">
        <title>The missing link: Bordetella petrii is endowed with both the metabolic versatility of environmental bacteria and virulence traits of pathogenic Bordetellae.</title>
        <authorList>
            <person name="Gross R."/>
            <person name="Guzman C.A."/>
            <person name="Sebaihia M."/>
            <person name="Martin dos Santos V.A.P."/>
            <person name="Pieper D.H."/>
            <person name="Koebnik R."/>
            <person name="Lechner M."/>
            <person name="Bartels D."/>
            <person name="Buhrmester J."/>
            <person name="Choudhuri J.V."/>
            <person name="Ebensen T."/>
            <person name="Gaigalat L."/>
            <person name="Herrmann S."/>
            <person name="Khachane A.N."/>
            <person name="Larisch C."/>
            <person name="Link S."/>
            <person name="Linke B."/>
            <person name="Meyer F."/>
            <person name="Mormann S."/>
            <person name="Nakunst D."/>
            <person name="Rueckert C."/>
            <person name="Schneiker-Bekel S."/>
            <person name="Schulze K."/>
            <person name="Voerholter F.-J."/>
            <person name="Yevsa T."/>
            <person name="Engle J.T."/>
            <person name="Goldman W.E."/>
            <person name="Puehler A."/>
            <person name="Goebel U.B."/>
            <person name="Goesmann A."/>
            <person name="Bloecker H."/>
            <person name="Kaiser O."/>
            <person name="Martinez-Arias R."/>
        </authorList>
    </citation>
    <scope>NUCLEOTIDE SEQUENCE [LARGE SCALE GENOMIC DNA]</scope>
    <source>
        <strain>ATCC BAA-461 / DSM 12804 / CCUG 43448</strain>
    </source>
</reference>
<evidence type="ECO:0000255" key="1">
    <source>
        <dbReference type="HAMAP-Rule" id="MF_00563"/>
    </source>
</evidence>
<feature type="chain" id="PRO_1000129271" description="Adenosylhomocysteinase">
    <location>
        <begin position="1"/>
        <end position="472"/>
    </location>
</feature>
<feature type="binding site" evidence="1">
    <location>
        <position position="62"/>
    </location>
    <ligand>
        <name>substrate</name>
    </ligand>
</feature>
<feature type="binding site" evidence="1">
    <location>
        <position position="137"/>
    </location>
    <ligand>
        <name>substrate</name>
    </ligand>
</feature>
<feature type="binding site" evidence="1">
    <location>
        <position position="197"/>
    </location>
    <ligand>
        <name>substrate</name>
    </ligand>
</feature>
<feature type="binding site" evidence="1">
    <location>
        <begin position="198"/>
        <end position="200"/>
    </location>
    <ligand>
        <name>NAD(+)</name>
        <dbReference type="ChEBI" id="CHEBI:57540"/>
    </ligand>
</feature>
<feature type="binding site" evidence="1">
    <location>
        <position position="227"/>
    </location>
    <ligand>
        <name>substrate</name>
    </ligand>
</feature>
<feature type="binding site" evidence="1">
    <location>
        <position position="231"/>
    </location>
    <ligand>
        <name>substrate</name>
    </ligand>
</feature>
<feature type="binding site" evidence="1">
    <location>
        <position position="232"/>
    </location>
    <ligand>
        <name>NAD(+)</name>
        <dbReference type="ChEBI" id="CHEBI:57540"/>
    </ligand>
</feature>
<feature type="binding site" evidence="1">
    <location>
        <begin position="261"/>
        <end position="266"/>
    </location>
    <ligand>
        <name>NAD(+)</name>
        <dbReference type="ChEBI" id="CHEBI:57540"/>
    </ligand>
</feature>
<feature type="binding site" evidence="1">
    <location>
        <position position="284"/>
    </location>
    <ligand>
        <name>NAD(+)</name>
        <dbReference type="ChEBI" id="CHEBI:57540"/>
    </ligand>
</feature>
<feature type="binding site" evidence="1">
    <location>
        <position position="319"/>
    </location>
    <ligand>
        <name>NAD(+)</name>
        <dbReference type="ChEBI" id="CHEBI:57540"/>
    </ligand>
</feature>
<feature type="binding site" evidence="1">
    <location>
        <begin position="340"/>
        <end position="342"/>
    </location>
    <ligand>
        <name>NAD(+)</name>
        <dbReference type="ChEBI" id="CHEBI:57540"/>
    </ligand>
</feature>
<feature type="binding site" evidence="1">
    <location>
        <position position="385"/>
    </location>
    <ligand>
        <name>NAD(+)</name>
        <dbReference type="ChEBI" id="CHEBI:57540"/>
    </ligand>
</feature>